<proteinExistence type="inferred from homology"/>
<evidence type="ECO:0000250" key="1"/>
<evidence type="ECO:0000250" key="2">
    <source>
        <dbReference type="UniProtKB" id="P40034"/>
    </source>
</evidence>
<evidence type="ECO:0000255" key="3">
    <source>
        <dbReference type="PROSITE-ProRule" id="PRU00146"/>
    </source>
</evidence>
<evidence type="ECO:0000255" key="4">
    <source>
        <dbReference type="PROSITE-ProRule" id="PRU00538"/>
    </source>
</evidence>
<evidence type="ECO:0000256" key="5">
    <source>
        <dbReference type="SAM" id="MobiDB-lite"/>
    </source>
</evidence>
<evidence type="ECO:0000305" key="6"/>
<protein>
    <recommendedName>
        <fullName>JmjC domain-containing histone demethylation protein 1</fullName>
        <ecNumber evidence="2">1.14.11.27</ecNumber>
    </recommendedName>
    <alternativeName>
        <fullName>[Histone-H3]-lysine-36 demethylase 1</fullName>
    </alternativeName>
</protein>
<comment type="function">
    <text evidence="2">Histone demethylase that specifically demethylates 'Lys-36' of histone H3, thereby playing a central role in histone code.</text>
</comment>
<comment type="catalytic activity">
    <reaction evidence="2">
        <text>N(6),N(6)-dimethyl-L-lysyl(36)-[histone H3] + 2 2-oxoglutarate + 2 O2 = L-lysyl(36)-[histone H3] + 2 formaldehyde + 2 succinate + 2 CO2</text>
        <dbReference type="Rhea" id="RHEA:42032"/>
        <dbReference type="Rhea" id="RHEA-COMP:9785"/>
        <dbReference type="Rhea" id="RHEA-COMP:9787"/>
        <dbReference type="ChEBI" id="CHEBI:15379"/>
        <dbReference type="ChEBI" id="CHEBI:16526"/>
        <dbReference type="ChEBI" id="CHEBI:16810"/>
        <dbReference type="ChEBI" id="CHEBI:16842"/>
        <dbReference type="ChEBI" id="CHEBI:29969"/>
        <dbReference type="ChEBI" id="CHEBI:30031"/>
        <dbReference type="ChEBI" id="CHEBI:61976"/>
        <dbReference type="EC" id="1.14.11.27"/>
    </reaction>
</comment>
<comment type="cofactor">
    <cofactor evidence="1">
        <name>Fe(2+)</name>
        <dbReference type="ChEBI" id="CHEBI:29033"/>
    </cofactor>
    <text evidence="1">Binds 1 Fe(2+) ion per subunit.</text>
</comment>
<comment type="subcellular location">
    <subcellularLocation>
        <location evidence="1">Nucleus</location>
    </subcellularLocation>
</comment>
<comment type="domain">
    <text evidence="1">The JmjC domain mediates the demethylation activity.</text>
</comment>
<comment type="similarity">
    <text evidence="6">Belongs to the JHDM1 histone demethylase family.</text>
</comment>
<name>JHD1_YARLI</name>
<reference key="1">
    <citation type="journal article" date="2004" name="Nature">
        <title>Genome evolution in yeasts.</title>
        <authorList>
            <person name="Dujon B."/>
            <person name="Sherman D."/>
            <person name="Fischer G."/>
            <person name="Durrens P."/>
            <person name="Casaregola S."/>
            <person name="Lafontaine I."/>
            <person name="de Montigny J."/>
            <person name="Marck C."/>
            <person name="Neuveglise C."/>
            <person name="Talla E."/>
            <person name="Goffard N."/>
            <person name="Frangeul L."/>
            <person name="Aigle M."/>
            <person name="Anthouard V."/>
            <person name="Babour A."/>
            <person name="Barbe V."/>
            <person name="Barnay S."/>
            <person name="Blanchin S."/>
            <person name="Beckerich J.-M."/>
            <person name="Beyne E."/>
            <person name="Bleykasten C."/>
            <person name="Boisrame A."/>
            <person name="Boyer J."/>
            <person name="Cattolico L."/>
            <person name="Confanioleri F."/>
            <person name="de Daruvar A."/>
            <person name="Despons L."/>
            <person name="Fabre E."/>
            <person name="Fairhead C."/>
            <person name="Ferry-Dumazet H."/>
            <person name="Groppi A."/>
            <person name="Hantraye F."/>
            <person name="Hennequin C."/>
            <person name="Jauniaux N."/>
            <person name="Joyet P."/>
            <person name="Kachouri R."/>
            <person name="Kerrest A."/>
            <person name="Koszul R."/>
            <person name="Lemaire M."/>
            <person name="Lesur I."/>
            <person name="Ma L."/>
            <person name="Muller H."/>
            <person name="Nicaud J.-M."/>
            <person name="Nikolski M."/>
            <person name="Oztas S."/>
            <person name="Ozier-Kalogeropoulos O."/>
            <person name="Pellenz S."/>
            <person name="Potier S."/>
            <person name="Richard G.-F."/>
            <person name="Straub M.-L."/>
            <person name="Suleau A."/>
            <person name="Swennen D."/>
            <person name="Tekaia F."/>
            <person name="Wesolowski-Louvel M."/>
            <person name="Westhof E."/>
            <person name="Wirth B."/>
            <person name="Zeniou-Meyer M."/>
            <person name="Zivanovic Y."/>
            <person name="Bolotin-Fukuhara M."/>
            <person name="Thierry A."/>
            <person name="Bouchier C."/>
            <person name="Caudron B."/>
            <person name="Scarpelli C."/>
            <person name="Gaillardin C."/>
            <person name="Weissenbach J."/>
            <person name="Wincker P."/>
            <person name="Souciet J.-L."/>
        </authorList>
    </citation>
    <scope>NUCLEOTIDE SEQUENCE [LARGE SCALE GENOMIC DNA]</scope>
    <source>
        <strain>CLIB 122 / E 150</strain>
    </source>
</reference>
<keyword id="KW-0156">Chromatin regulator</keyword>
<keyword id="KW-0223">Dioxygenase</keyword>
<keyword id="KW-0408">Iron</keyword>
<keyword id="KW-0479">Metal-binding</keyword>
<keyword id="KW-0539">Nucleus</keyword>
<keyword id="KW-0560">Oxidoreductase</keyword>
<keyword id="KW-1185">Reference proteome</keyword>
<keyword id="KW-0804">Transcription</keyword>
<keyword id="KW-0805">Transcription regulation</keyword>
<keyword id="KW-0862">Zinc</keyword>
<keyword id="KW-0863">Zinc-finger</keyword>
<accession>Q6C423</accession>
<gene>
    <name type="primary">JHD1</name>
    <name type="ordered locus">YALI0E30393g</name>
</gene>
<feature type="chain" id="PRO_0000226800" description="JmjC domain-containing histone demethylation protein 1">
    <location>
        <begin position="1"/>
        <end position="510"/>
    </location>
</feature>
<feature type="domain" description="JmjC" evidence="4">
    <location>
        <begin position="216"/>
        <end position="365"/>
    </location>
</feature>
<feature type="zinc finger region" description="PHD-type" evidence="3">
    <location>
        <begin position="2"/>
        <end position="53"/>
    </location>
</feature>
<feature type="region of interest" description="Disordered" evidence="5">
    <location>
        <begin position="475"/>
        <end position="510"/>
    </location>
</feature>
<feature type="compositionally biased region" description="Basic and acidic residues" evidence="5">
    <location>
        <begin position="477"/>
        <end position="510"/>
    </location>
</feature>
<feature type="binding site" evidence="1">
    <location>
        <position position="255"/>
    </location>
    <ligand>
        <name>substrate</name>
    </ligand>
</feature>
<feature type="binding site" evidence="4">
    <location>
        <position position="258"/>
    </location>
    <ligand>
        <name>Fe cation</name>
        <dbReference type="ChEBI" id="CHEBI:24875"/>
        <note>catalytic</note>
    </ligand>
</feature>
<feature type="binding site" evidence="4">
    <location>
        <position position="260"/>
    </location>
    <ligand>
        <name>Fe cation</name>
        <dbReference type="ChEBI" id="CHEBI:24875"/>
        <note>catalytic</note>
    </ligand>
</feature>
<feature type="binding site" evidence="1">
    <location>
        <position position="275"/>
    </location>
    <ligand>
        <name>substrate</name>
    </ligand>
</feature>
<feature type="binding site" evidence="4">
    <location>
        <position position="333"/>
    </location>
    <ligand>
        <name>Fe cation</name>
        <dbReference type="ChEBI" id="CHEBI:24875"/>
        <note>catalytic</note>
    </ligand>
</feature>
<organism>
    <name type="scientific">Yarrowia lipolytica (strain CLIB 122 / E 150)</name>
    <name type="common">Yeast</name>
    <name type="synonym">Candida lipolytica</name>
    <dbReference type="NCBI Taxonomy" id="284591"/>
    <lineage>
        <taxon>Eukaryota</taxon>
        <taxon>Fungi</taxon>
        <taxon>Dikarya</taxon>
        <taxon>Ascomycota</taxon>
        <taxon>Saccharomycotina</taxon>
        <taxon>Dipodascomycetes</taxon>
        <taxon>Dipodascales</taxon>
        <taxon>Dipodascales incertae sedis</taxon>
        <taxon>Yarrowia</taxon>
    </lineage>
</organism>
<dbReference type="EC" id="1.14.11.27" evidence="2"/>
<dbReference type="EMBL" id="CR382131">
    <property type="protein sequence ID" value="CAG80193.1"/>
    <property type="molecule type" value="Genomic_DNA"/>
</dbReference>
<dbReference type="RefSeq" id="XP_504589.1">
    <property type="nucleotide sequence ID" value="XM_504589.1"/>
</dbReference>
<dbReference type="SMR" id="Q6C423"/>
<dbReference type="FunCoup" id="Q6C423">
    <property type="interactions" value="12"/>
</dbReference>
<dbReference type="STRING" id="284591.Q6C423"/>
<dbReference type="EnsemblFungi" id="CAG80193">
    <property type="protein sequence ID" value="CAG80193"/>
    <property type="gene ID" value="YALI0_E30393g"/>
</dbReference>
<dbReference type="KEGG" id="yli:2912961"/>
<dbReference type="VEuPathDB" id="FungiDB:YALI0_E30393g"/>
<dbReference type="HOGENOM" id="CLU_003540_6_2_1"/>
<dbReference type="InParanoid" id="Q6C423"/>
<dbReference type="OMA" id="SVYYTVC"/>
<dbReference type="OrthoDB" id="110018at4891"/>
<dbReference type="Proteomes" id="UP000001300">
    <property type="component" value="Chromosome E"/>
</dbReference>
<dbReference type="GO" id="GO:0005634">
    <property type="term" value="C:nucleus"/>
    <property type="evidence" value="ECO:0007669"/>
    <property type="project" value="UniProtKB-SubCell"/>
</dbReference>
<dbReference type="GO" id="GO:0032452">
    <property type="term" value="F:histone demethylase activity"/>
    <property type="evidence" value="ECO:0000318"/>
    <property type="project" value="GO_Central"/>
</dbReference>
<dbReference type="GO" id="GO:0140680">
    <property type="term" value="F:histone H3K36me/H3K36me2 demethylase activity"/>
    <property type="evidence" value="ECO:0007669"/>
    <property type="project" value="UniProtKB-EC"/>
</dbReference>
<dbReference type="GO" id="GO:0003712">
    <property type="term" value="F:transcription coregulator activity"/>
    <property type="evidence" value="ECO:0000318"/>
    <property type="project" value="GO_Central"/>
</dbReference>
<dbReference type="GO" id="GO:0008270">
    <property type="term" value="F:zinc ion binding"/>
    <property type="evidence" value="ECO:0007669"/>
    <property type="project" value="UniProtKB-KW"/>
</dbReference>
<dbReference type="GO" id="GO:0006338">
    <property type="term" value="P:chromatin remodeling"/>
    <property type="evidence" value="ECO:0000318"/>
    <property type="project" value="GO_Central"/>
</dbReference>
<dbReference type="GO" id="GO:0006357">
    <property type="term" value="P:regulation of transcription by RNA polymerase II"/>
    <property type="evidence" value="ECO:0000318"/>
    <property type="project" value="GO_Central"/>
</dbReference>
<dbReference type="CDD" id="cd15517">
    <property type="entry name" value="PHD_TCF19_like"/>
    <property type="match status" value="1"/>
</dbReference>
<dbReference type="Gene3D" id="2.60.120.650">
    <property type="entry name" value="Cupin"/>
    <property type="match status" value="1"/>
</dbReference>
<dbReference type="InterPro" id="IPR041070">
    <property type="entry name" value="JHD"/>
</dbReference>
<dbReference type="InterPro" id="IPR050690">
    <property type="entry name" value="JHDM1_Histone_Demethylase"/>
</dbReference>
<dbReference type="InterPro" id="IPR003347">
    <property type="entry name" value="JmjC_dom"/>
</dbReference>
<dbReference type="InterPro" id="IPR011011">
    <property type="entry name" value="Znf_FYVE_PHD"/>
</dbReference>
<dbReference type="InterPro" id="IPR001965">
    <property type="entry name" value="Znf_PHD"/>
</dbReference>
<dbReference type="InterPro" id="IPR019787">
    <property type="entry name" value="Znf_PHD-finger"/>
</dbReference>
<dbReference type="PANTHER" id="PTHR23123">
    <property type="entry name" value="PHD/F-BOX CONTAINING PROTEIN"/>
    <property type="match status" value="1"/>
</dbReference>
<dbReference type="Pfam" id="PF17811">
    <property type="entry name" value="JHD"/>
    <property type="match status" value="1"/>
</dbReference>
<dbReference type="Pfam" id="PF02373">
    <property type="entry name" value="JmjC"/>
    <property type="match status" value="1"/>
</dbReference>
<dbReference type="Pfam" id="PF00628">
    <property type="entry name" value="PHD"/>
    <property type="match status" value="1"/>
</dbReference>
<dbReference type="SMART" id="SM00558">
    <property type="entry name" value="JmjC"/>
    <property type="match status" value="1"/>
</dbReference>
<dbReference type="SMART" id="SM00249">
    <property type="entry name" value="PHD"/>
    <property type="match status" value="1"/>
</dbReference>
<dbReference type="SUPFAM" id="SSF51197">
    <property type="entry name" value="Clavaminate synthase-like"/>
    <property type="match status" value="1"/>
</dbReference>
<dbReference type="SUPFAM" id="SSF57903">
    <property type="entry name" value="FYVE/PHD zinc finger"/>
    <property type="match status" value="1"/>
</dbReference>
<dbReference type="PROSITE" id="PS51184">
    <property type="entry name" value="JMJC"/>
    <property type="match status" value="1"/>
</dbReference>
<dbReference type="PROSITE" id="PS50016">
    <property type="entry name" value="ZF_PHD_2"/>
    <property type="match status" value="1"/>
</dbReference>
<sequence length="510" mass="57824">MPNRCDFCTSSSTKDKQQWTQCDGCDRWVHDVCVSITDPVSYAKYHCPTCTKTKGPSLYKRQSKRKKIDIDYAAMHSGNVDMSLRTRHVHSSRFTDVAASAQNKEPFKRVSGTELTLDWAQSSDGLNEPVIVPKEYKDTLGMYIPEDLTVRQVAEAVGMESPVEVINVVSQNGSPGWNMGKWTEYYEDIEGRDTILNVISLEISASALGKTIVRPTLVRELDLVDRVWPTNTDAARESKPRVSLYALMSVEDSFTDFHIDFAGSSVFYHVLKGRKSFMFIRPTARNLAAYSQWCLSADQNVVFLPDVLSPDSDIYTVHLSPGDTMYIPSGWIHAVHSPQDSLVVGGNFITPLNMKTQIDIAGIEVRTKVPMKFRYPLFAGVMWYYVLQLLANPERLNTMSTKERDGLNSVAEYLSGFIKTMSPTMKDVQYRRFVANFPMEIRPFPGKTLLDYCAMLDFYPKGVQETVDIDIRKKKGESKEKHKIESQLPEEKILQGSKLESKEEVQTENF</sequence>